<evidence type="ECO:0000255" key="1">
    <source>
        <dbReference type="HAMAP-Rule" id="MF_00382"/>
    </source>
</evidence>
<evidence type="ECO:0000305" key="2"/>
<gene>
    <name evidence="1" type="primary">rplT</name>
    <name type="ordered locus">FN0325</name>
</gene>
<keyword id="KW-1185">Reference proteome</keyword>
<keyword id="KW-0687">Ribonucleoprotein</keyword>
<keyword id="KW-0689">Ribosomal protein</keyword>
<keyword id="KW-0694">RNA-binding</keyword>
<keyword id="KW-0699">rRNA-binding</keyword>
<feature type="chain" id="PRO_0000177161" description="Large ribosomal subunit protein bL20">
    <location>
        <begin position="1"/>
        <end position="116"/>
    </location>
</feature>
<reference key="1">
    <citation type="journal article" date="2002" name="J. Bacteriol.">
        <title>Genome sequence and analysis of the oral bacterium Fusobacterium nucleatum strain ATCC 25586.</title>
        <authorList>
            <person name="Kapatral V."/>
            <person name="Anderson I."/>
            <person name="Ivanova N."/>
            <person name="Reznik G."/>
            <person name="Los T."/>
            <person name="Lykidis A."/>
            <person name="Bhattacharyya A."/>
            <person name="Bartman A."/>
            <person name="Gardner W."/>
            <person name="Grechkin G."/>
            <person name="Zhu L."/>
            <person name="Vasieva O."/>
            <person name="Chu L."/>
            <person name="Kogan Y."/>
            <person name="Chaga O."/>
            <person name="Goltsman E."/>
            <person name="Bernal A."/>
            <person name="Larsen N."/>
            <person name="D'Souza M."/>
            <person name="Walunas T."/>
            <person name="Pusch G."/>
            <person name="Haselkorn R."/>
            <person name="Fonstein M."/>
            <person name="Kyrpides N.C."/>
            <person name="Overbeek R."/>
        </authorList>
    </citation>
    <scope>NUCLEOTIDE SEQUENCE [LARGE SCALE GENOMIC DNA]</scope>
    <source>
        <strain>ATCC 25586 / DSM 15643 / BCRC 10681 / CIP 101130 / JCM 8532 / KCTC 2640 / LMG 13131 / VPI 4355</strain>
    </source>
</reference>
<accession>Q8RGH2</accession>
<organism>
    <name type="scientific">Fusobacterium nucleatum subsp. nucleatum (strain ATCC 25586 / DSM 15643 / BCRC 10681 / CIP 101130 / JCM 8532 / KCTC 2640 / LMG 13131 / VPI 4355)</name>
    <dbReference type="NCBI Taxonomy" id="190304"/>
    <lineage>
        <taxon>Bacteria</taxon>
        <taxon>Fusobacteriati</taxon>
        <taxon>Fusobacteriota</taxon>
        <taxon>Fusobacteriia</taxon>
        <taxon>Fusobacteriales</taxon>
        <taxon>Fusobacteriaceae</taxon>
        <taxon>Fusobacterium</taxon>
    </lineage>
</organism>
<protein>
    <recommendedName>
        <fullName evidence="1">Large ribosomal subunit protein bL20</fullName>
    </recommendedName>
    <alternativeName>
        <fullName evidence="2">50S ribosomal protein L20</fullName>
    </alternativeName>
</protein>
<proteinExistence type="inferred from homology"/>
<sequence length="116" mass="13056">MRVKTGIIRRKRHKRVLKAAKGFRGASGDAFKQAKQATRRAMAFATRDRKVNKRRMRQLWITRINSAARMNGVSYSVLMNGLKKAGILLDRKVLADIALNNATEFTKLVEAAKSAL</sequence>
<comment type="function">
    <text evidence="1">Binds directly to 23S ribosomal RNA and is necessary for the in vitro assembly process of the 50S ribosomal subunit. It is not involved in the protein synthesizing functions of that subunit.</text>
</comment>
<comment type="similarity">
    <text evidence="1">Belongs to the bacterial ribosomal protein bL20 family.</text>
</comment>
<dbReference type="EMBL" id="AE009951">
    <property type="protein sequence ID" value="AAL94529.1"/>
    <property type="molecule type" value="Genomic_DNA"/>
</dbReference>
<dbReference type="RefSeq" id="NP_603230.1">
    <property type="nucleotide sequence ID" value="NC_003454.1"/>
</dbReference>
<dbReference type="RefSeq" id="WP_005901611.1">
    <property type="nucleotide sequence ID" value="NZ_OZ209243.1"/>
</dbReference>
<dbReference type="SMR" id="Q8RGH2"/>
<dbReference type="FunCoup" id="Q8RGH2">
    <property type="interactions" value="383"/>
</dbReference>
<dbReference type="STRING" id="190304.FN0325"/>
<dbReference type="PaxDb" id="190304-FN0325"/>
<dbReference type="EnsemblBacteria" id="AAL94529">
    <property type="protein sequence ID" value="AAL94529"/>
    <property type="gene ID" value="FN0325"/>
</dbReference>
<dbReference type="GeneID" id="79799975"/>
<dbReference type="KEGG" id="fnu:FN0325"/>
<dbReference type="PATRIC" id="fig|190304.8.peg.903"/>
<dbReference type="eggNOG" id="COG0292">
    <property type="taxonomic scope" value="Bacteria"/>
</dbReference>
<dbReference type="HOGENOM" id="CLU_123265_0_1_0"/>
<dbReference type="InParanoid" id="Q8RGH2"/>
<dbReference type="BioCyc" id="FNUC190304:G1FZS-922-MONOMER"/>
<dbReference type="Proteomes" id="UP000002521">
    <property type="component" value="Chromosome"/>
</dbReference>
<dbReference type="GO" id="GO:0022625">
    <property type="term" value="C:cytosolic large ribosomal subunit"/>
    <property type="evidence" value="ECO:0000318"/>
    <property type="project" value="GO_Central"/>
</dbReference>
<dbReference type="GO" id="GO:0019843">
    <property type="term" value="F:rRNA binding"/>
    <property type="evidence" value="ECO:0007669"/>
    <property type="project" value="UniProtKB-UniRule"/>
</dbReference>
<dbReference type="GO" id="GO:0003735">
    <property type="term" value="F:structural constituent of ribosome"/>
    <property type="evidence" value="ECO:0000318"/>
    <property type="project" value="GO_Central"/>
</dbReference>
<dbReference type="GO" id="GO:0000027">
    <property type="term" value="P:ribosomal large subunit assembly"/>
    <property type="evidence" value="ECO:0007669"/>
    <property type="project" value="UniProtKB-UniRule"/>
</dbReference>
<dbReference type="GO" id="GO:0006412">
    <property type="term" value="P:translation"/>
    <property type="evidence" value="ECO:0007669"/>
    <property type="project" value="InterPro"/>
</dbReference>
<dbReference type="CDD" id="cd07026">
    <property type="entry name" value="Ribosomal_L20"/>
    <property type="match status" value="1"/>
</dbReference>
<dbReference type="FunFam" id="1.10.1900.20:FF:000001">
    <property type="entry name" value="50S ribosomal protein L20"/>
    <property type="match status" value="1"/>
</dbReference>
<dbReference type="Gene3D" id="6.10.160.10">
    <property type="match status" value="1"/>
</dbReference>
<dbReference type="Gene3D" id="1.10.1900.20">
    <property type="entry name" value="Ribosomal protein L20"/>
    <property type="match status" value="1"/>
</dbReference>
<dbReference type="HAMAP" id="MF_00382">
    <property type="entry name" value="Ribosomal_bL20"/>
    <property type="match status" value="1"/>
</dbReference>
<dbReference type="InterPro" id="IPR005813">
    <property type="entry name" value="Ribosomal_bL20"/>
</dbReference>
<dbReference type="InterPro" id="IPR049946">
    <property type="entry name" value="RIBOSOMAL_L20_CS"/>
</dbReference>
<dbReference type="InterPro" id="IPR035566">
    <property type="entry name" value="Ribosomal_protein_bL20_C"/>
</dbReference>
<dbReference type="NCBIfam" id="TIGR01032">
    <property type="entry name" value="rplT_bact"/>
    <property type="match status" value="1"/>
</dbReference>
<dbReference type="PANTHER" id="PTHR10986">
    <property type="entry name" value="39S RIBOSOMAL PROTEIN L20"/>
    <property type="match status" value="1"/>
</dbReference>
<dbReference type="Pfam" id="PF00453">
    <property type="entry name" value="Ribosomal_L20"/>
    <property type="match status" value="1"/>
</dbReference>
<dbReference type="PRINTS" id="PR00062">
    <property type="entry name" value="RIBOSOMALL20"/>
</dbReference>
<dbReference type="SUPFAM" id="SSF74731">
    <property type="entry name" value="Ribosomal protein L20"/>
    <property type="match status" value="1"/>
</dbReference>
<dbReference type="PROSITE" id="PS00937">
    <property type="entry name" value="RIBOSOMAL_L20"/>
    <property type="match status" value="1"/>
</dbReference>
<name>RL20_FUSNN</name>